<feature type="chain" id="PRO_0000093811" description="Serine transporter SdaC">
    <location>
        <begin position="1"/>
        <end position="429"/>
    </location>
</feature>
<feature type="topological domain" description="Cytoplasmic" evidence="2">
    <location>
        <begin position="1"/>
        <end position="22"/>
    </location>
</feature>
<feature type="transmembrane region" description="Helical" evidence="2">
    <location>
        <begin position="23"/>
        <end position="43"/>
    </location>
</feature>
<feature type="topological domain" description="Periplasmic" evidence="2">
    <location>
        <begin position="44"/>
        <end position="46"/>
    </location>
</feature>
<feature type="transmembrane region" description="Helical" evidence="2">
    <location>
        <begin position="47"/>
        <end position="67"/>
    </location>
</feature>
<feature type="topological domain" description="Cytoplasmic" evidence="2">
    <location>
        <begin position="68"/>
        <end position="99"/>
    </location>
</feature>
<feature type="transmembrane region" description="Helical" evidence="2">
    <location>
        <begin position="100"/>
        <end position="120"/>
    </location>
</feature>
<feature type="topological domain" description="Periplasmic" evidence="2">
    <location>
        <begin position="121"/>
        <end position="140"/>
    </location>
</feature>
<feature type="transmembrane region" description="Helical" evidence="2">
    <location>
        <begin position="141"/>
        <end position="161"/>
    </location>
</feature>
<feature type="topological domain" description="Cytoplasmic" evidence="2">
    <location>
        <begin position="162"/>
        <end position="163"/>
    </location>
</feature>
<feature type="transmembrane region" description="Helical" evidence="2">
    <location>
        <begin position="164"/>
        <end position="184"/>
    </location>
</feature>
<feature type="topological domain" description="Periplasmic" evidence="2">
    <location>
        <begin position="185"/>
        <end position="201"/>
    </location>
</feature>
<feature type="transmembrane region" description="Helical" evidence="2">
    <location>
        <begin position="202"/>
        <end position="222"/>
    </location>
</feature>
<feature type="topological domain" description="Cytoplasmic" evidence="2">
    <location>
        <begin position="223"/>
        <end position="249"/>
    </location>
</feature>
<feature type="transmembrane region" description="Helical" evidence="2">
    <location>
        <begin position="250"/>
        <end position="270"/>
    </location>
</feature>
<feature type="topological domain" description="Periplasmic" evidence="2">
    <location>
        <begin position="271"/>
        <end position="297"/>
    </location>
</feature>
<feature type="transmembrane region" description="Helical" evidence="2">
    <location>
        <begin position="298"/>
        <end position="318"/>
    </location>
</feature>
<feature type="topological domain" description="Cytoplasmic" evidence="2">
    <location>
        <begin position="319"/>
        <end position="347"/>
    </location>
</feature>
<feature type="transmembrane region" description="Helical" evidence="2">
    <location>
        <begin position="348"/>
        <end position="368"/>
    </location>
</feature>
<feature type="topological domain" description="Periplasmic" evidence="2">
    <location>
        <position position="369"/>
    </location>
</feature>
<feature type="transmembrane region" description="Helical" evidence="2">
    <location>
        <begin position="370"/>
        <end position="390"/>
    </location>
</feature>
<feature type="topological domain" description="Cytoplasmic" evidence="2">
    <location>
        <begin position="391"/>
        <end position="406"/>
    </location>
</feature>
<feature type="transmembrane region" description="Helical" evidence="2">
    <location>
        <begin position="407"/>
        <end position="427"/>
    </location>
</feature>
<feature type="topological domain" description="Periplasmic" evidence="2">
    <location>
        <begin position="428"/>
        <end position="429"/>
    </location>
</feature>
<feature type="sequence conflict" description="In Ref. 2; AAP18123." evidence="3" ref="2">
    <original>N</original>
    <variation>K</variation>
    <location>
        <position position="235"/>
    </location>
</feature>
<feature type="sequence conflict" description="In Ref. 2; AAP18123." evidence="3" ref="2">
    <original>EMI</original>
    <variation>VMF</variation>
    <location>
        <begin position="262"/>
        <end position="264"/>
    </location>
</feature>
<feature type="sequence conflict" description="In Ref. 2; AAP18123." evidence="3" ref="2">
    <original>I</original>
    <variation>S</variation>
    <location>
        <position position="268"/>
    </location>
</feature>
<feature type="sequence conflict" description="In Ref. 2; AAP18123." evidence="3" ref="2">
    <original>H</original>
    <variation>Q</variation>
    <location>
        <position position="284"/>
    </location>
</feature>
<accession>Q83QD0</accession>
<keyword id="KW-0029">Amino-acid transport</keyword>
<keyword id="KW-0997">Cell inner membrane</keyword>
<keyword id="KW-1003">Cell membrane</keyword>
<keyword id="KW-0472">Membrane</keyword>
<keyword id="KW-1185">Reference proteome</keyword>
<keyword id="KW-0769">Symport</keyword>
<keyword id="KW-0812">Transmembrane</keyword>
<keyword id="KW-1133">Transmembrane helix</keyword>
<keyword id="KW-0813">Transport</keyword>
<dbReference type="EMBL" id="AE005674">
    <property type="protein sequence ID" value="AAN44298.1"/>
    <property type="molecule type" value="Genomic_DNA"/>
</dbReference>
<dbReference type="EMBL" id="AE014073">
    <property type="protein sequence ID" value="AAP18123.1"/>
    <property type="molecule type" value="Genomic_DNA"/>
</dbReference>
<dbReference type="RefSeq" id="NP_708591.1">
    <property type="nucleotide sequence ID" value="NC_004337.2"/>
</dbReference>
<dbReference type="RefSeq" id="WP_000450479.1">
    <property type="nucleotide sequence ID" value="NZ_CP123365.1"/>
</dbReference>
<dbReference type="STRING" id="198214.SF2810"/>
<dbReference type="PaxDb" id="198214-SF2810"/>
<dbReference type="GeneID" id="1025784"/>
<dbReference type="KEGG" id="sfl:SF2810"/>
<dbReference type="KEGG" id="sfx:S3005"/>
<dbReference type="PATRIC" id="fig|198214.7.peg.3344"/>
<dbReference type="HOGENOM" id="CLU_052043_1_1_6"/>
<dbReference type="Proteomes" id="UP000001006">
    <property type="component" value="Chromosome"/>
</dbReference>
<dbReference type="Proteomes" id="UP000002673">
    <property type="component" value="Chromosome"/>
</dbReference>
<dbReference type="GO" id="GO:0005886">
    <property type="term" value="C:plasma membrane"/>
    <property type="evidence" value="ECO:0007669"/>
    <property type="project" value="UniProtKB-SubCell"/>
</dbReference>
<dbReference type="GO" id="GO:0015171">
    <property type="term" value="F:amino acid transmembrane transporter activity"/>
    <property type="evidence" value="ECO:0007669"/>
    <property type="project" value="InterPro"/>
</dbReference>
<dbReference type="GO" id="GO:0015293">
    <property type="term" value="F:symporter activity"/>
    <property type="evidence" value="ECO:0007669"/>
    <property type="project" value="UniProtKB-KW"/>
</dbReference>
<dbReference type="InterPro" id="IPR018227">
    <property type="entry name" value="Amino_acid_transport_2"/>
</dbReference>
<dbReference type="InterPro" id="IPR004694">
    <property type="entry name" value="Hydroxy_aa_transpt"/>
</dbReference>
<dbReference type="NCBIfam" id="TIGR00814">
    <property type="entry name" value="stp"/>
    <property type="match status" value="1"/>
</dbReference>
<dbReference type="PANTHER" id="PTHR35334">
    <property type="entry name" value="SERINE TRANSPORTER"/>
    <property type="match status" value="1"/>
</dbReference>
<dbReference type="PANTHER" id="PTHR35334:SF2">
    <property type="entry name" value="SERINE TRANSPORTER SDAC"/>
    <property type="match status" value="1"/>
</dbReference>
<proteinExistence type="inferred from homology"/>
<name>SDAC_SHIFL</name>
<organism>
    <name type="scientific">Shigella flexneri</name>
    <dbReference type="NCBI Taxonomy" id="623"/>
    <lineage>
        <taxon>Bacteria</taxon>
        <taxon>Pseudomonadati</taxon>
        <taxon>Pseudomonadota</taxon>
        <taxon>Gammaproteobacteria</taxon>
        <taxon>Enterobacterales</taxon>
        <taxon>Enterobacteriaceae</taxon>
        <taxon>Shigella</taxon>
    </lineage>
</organism>
<protein>
    <recommendedName>
        <fullName evidence="1">Serine transporter SdaC</fullName>
    </recommendedName>
    <alternativeName>
        <fullName evidence="1">H(+)/L-serine symporter</fullName>
    </alternativeName>
</protein>
<comment type="function">
    <text evidence="1">Mediates the import of L-serine into the cell. Is energized by proton cotransport.</text>
</comment>
<comment type="catalytic activity">
    <reaction evidence="1">
        <text>L-serine(in) + H(+)(in) = L-serine(out) + H(+)(out)</text>
        <dbReference type="Rhea" id="RHEA:28887"/>
        <dbReference type="ChEBI" id="CHEBI:15378"/>
        <dbReference type="ChEBI" id="CHEBI:33384"/>
    </reaction>
    <physiologicalReaction direction="right-to-left" evidence="1">
        <dbReference type="Rhea" id="RHEA:28889"/>
    </physiologicalReaction>
</comment>
<comment type="subcellular location">
    <subcellularLocation>
        <location evidence="1">Cell inner membrane</location>
        <topology evidence="2">Multi-pass membrane protein</topology>
    </subcellularLocation>
</comment>
<comment type="similarity">
    <text evidence="3">Belongs to the amino acid/polyamine transporter 2 family. SdaC/TdcC subfamily.</text>
</comment>
<gene>
    <name type="primary">sdaC</name>
    <name type="ordered locus">SF2810</name>
    <name type="ordered locus">S3005</name>
</gene>
<reference key="1">
    <citation type="journal article" date="2002" name="Nucleic Acids Res.">
        <title>Genome sequence of Shigella flexneri 2a: insights into pathogenicity through comparison with genomes of Escherichia coli K12 and O157.</title>
        <authorList>
            <person name="Jin Q."/>
            <person name="Yuan Z."/>
            <person name="Xu J."/>
            <person name="Wang Y."/>
            <person name="Shen Y."/>
            <person name="Lu W."/>
            <person name="Wang J."/>
            <person name="Liu H."/>
            <person name="Yang J."/>
            <person name="Yang F."/>
            <person name="Zhang X."/>
            <person name="Zhang J."/>
            <person name="Yang G."/>
            <person name="Wu H."/>
            <person name="Qu D."/>
            <person name="Dong J."/>
            <person name="Sun L."/>
            <person name="Xue Y."/>
            <person name="Zhao A."/>
            <person name="Gao Y."/>
            <person name="Zhu J."/>
            <person name="Kan B."/>
            <person name="Ding K."/>
            <person name="Chen S."/>
            <person name="Cheng H."/>
            <person name="Yao Z."/>
            <person name="He B."/>
            <person name="Chen R."/>
            <person name="Ma D."/>
            <person name="Qiang B."/>
            <person name="Wen Y."/>
            <person name="Hou Y."/>
            <person name="Yu J."/>
        </authorList>
    </citation>
    <scope>NUCLEOTIDE SEQUENCE [LARGE SCALE GENOMIC DNA]</scope>
    <source>
        <strain>301 / Serotype 2a</strain>
    </source>
</reference>
<reference key="2">
    <citation type="journal article" date="2003" name="Infect. Immun.">
        <title>Complete genome sequence and comparative genomics of Shigella flexneri serotype 2a strain 2457T.</title>
        <authorList>
            <person name="Wei J."/>
            <person name="Goldberg M.B."/>
            <person name="Burland V."/>
            <person name="Venkatesan M.M."/>
            <person name="Deng W."/>
            <person name="Fournier G."/>
            <person name="Mayhew G.F."/>
            <person name="Plunkett G. III"/>
            <person name="Rose D.J."/>
            <person name="Darling A."/>
            <person name="Mau B."/>
            <person name="Perna N.T."/>
            <person name="Payne S.M."/>
            <person name="Runyen-Janecky L.J."/>
            <person name="Zhou S."/>
            <person name="Schwartz D.C."/>
            <person name="Blattner F.R."/>
        </authorList>
    </citation>
    <scope>NUCLEOTIDE SEQUENCE [LARGE SCALE GENOMIC DNA]</scope>
    <source>
        <strain>ATCC 700930 / 2457T / Serotype 2a</strain>
    </source>
</reference>
<sequence>METTQTSTIASKDSRSAWRKTDTMWMLGLYGTAIGAGVLFLPINAGVGGMIPLIIMAILAFPMTFFAHRGLTRFVLSGKNPGEDITEVVEEHFGIGAGKLITLLYFFAIYPILLVYSVAITNTVESFMSHQLGMTPPPRAILSLILIVGMMTIVRFGEQMIVKAMSILVFPFVGVLMLLALYLIPQWNGAALETLSLDTASATGNGLWMTLWLAIPVMVFSFNHSPIISSFAVANREEYGDMAEQKCSKILAFAHIMMVLTEMIFVFICVLSLTPADLAAAKEHNISILSYLANHFNAPVIAWMAPIIAIIAITKSFLGHYLGAREGFNGMVIKSLRGKGKSIEINKLNRITALFMLVTTWIVATLNPSILGMIETLGGPIIAMILFLMPMYAIQKVPAMRKYSGHISNVFVVVMGLIAISAIFYSLFS</sequence>
<evidence type="ECO:0000250" key="1">
    <source>
        <dbReference type="UniProtKB" id="P0AAD6"/>
    </source>
</evidence>
<evidence type="ECO:0000255" key="2"/>
<evidence type="ECO:0000305" key="3"/>